<gene>
    <name evidence="36 39" type="primary">CTNS</name>
</gene>
<dbReference type="EMBL" id="Y15924">
    <property type="protein sequence ID" value="CAA75882.1"/>
    <property type="molecule type" value="Genomic_DNA"/>
</dbReference>
<dbReference type="EMBL" id="Y15925">
    <property type="protein sequence ID" value="CAA75882.1"/>
    <property type="status" value="JOINED"/>
    <property type="molecule type" value="Genomic_DNA"/>
</dbReference>
<dbReference type="EMBL" id="Y15926">
    <property type="protein sequence ID" value="CAA75882.1"/>
    <property type="status" value="JOINED"/>
    <property type="molecule type" value="Genomic_DNA"/>
</dbReference>
<dbReference type="EMBL" id="Y15927">
    <property type="protein sequence ID" value="CAA75882.1"/>
    <property type="status" value="JOINED"/>
    <property type="molecule type" value="Genomic_DNA"/>
</dbReference>
<dbReference type="EMBL" id="Y15928">
    <property type="protein sequence ID" value="CAA75882.1"/>
    <property type="status" value="JOINED"/>
    <property type="molecule type" value="Genomic_DNA"/>
</dbReference>
<dbReference type="EMBL" id="Y15929">
    <property type="protein sequence ID" value="CAA75882.1"/>
    <property type="status" value="JOINED"/>
    <property type="molecule type" value="Genomic_DNA"/>
</dbReference>
<dbReference type="EMBL" id="Y15930">
    <property type="protein sequence ID" value="CAA75882.1"/>
    <property type="status" value="JOINED"/>
    <property type="molecule type" value="Genomic_DNA"/>
</dbReference>
<dbReference type="EMBL" id="Y15931">
    <property type="protein sequence ID" value="CAA75882.1"/>
    <property type="status" value="JOINED"/>
    <property type="molecule type" value="Genomic_DNA"/>
</dbReference>
<dbReference type="EMBL" id="Y15932">
    <property type="protein sequence ID" value="CAA75882.1"/>
    <property type="status" value="JOINED"/>
    <property type="molecule type" value="Genomic_DNA"/>
</dbReference>
<dbReference type="EMBL" id="Y15933">
    <property type="protein sequence ID" value="CAA75882.1"/>
    <property type="status" value="JOINED"/>
    <property type="molecule type" value="Genomic_DNA"/>
</dbReference>
<dbReference type="EMBL" id="AJ222967">
    <property type="protein sequence ID" value="CAA11021.1"/>
    <property type="molecule type" value="mRNA"/>
</dbReference>
<dbReference type="EMBL" id="AF168787">
    <property type="protein sequence ID" value="AAF43102.1"/>
    <property type="molecule type" value="Genomic_DNA"/>
</dbReference>
<dbReference type="EMBL" id="AK292019">
    <property type="protein sequence ID" value="BAF84708.1"/>
    <property type="molecule type" value="mRNA"/>
</dbReference>
<dbReference type="EMBL" id="AC027796">
    <property type="status" value="NOT_ANNOTATED_CDS"/>
    <property type="molecule type" value="Genomic_DNA"/>
</dbReference>
<dbReference type="EMBL" id="AC132942">
    <property type="status" value="NOT_ANNOTATED_CDS"/>
    <property type="molecule type" value="Genomic_DNA"/>
</dbReference>
<dbReference type="EMBL" id="CH471108">
    <property type="protein sequence ID" value="EAW90495.1"/>
    <property type="molecule type" value="Genomic_DNA"/>
</dbReference>
<dbReference type="EMBL" id="CH471108">
    <property type="protein sequence ID" value="EAW90494.1"/>
    <property type="molecule type" value="Genomic_DNA"/>
</dbReference>
<dbReference type="EMBL" id="CH471108">
    <property type="protein sequence ID" value="EAW90496.1"/>
    <property type="molecule type" value="Genomic_DNA"/>
</dbReference>
<dbReference type="EMBL" id="BC032850">
    <property type="protein sequence ID" value="AAH32850.1"/>
    <property type="molecule type" value="mRNA"/>
</dbReference>
<dbReference type="EMBL" id="AH008011">
    <property type="protein sequence ID" value="AAD45630.1"/>
    <property type="molecule type" value="Genomic_DNA"/>
</dbReference>
<dbReference type="CCDS" id="CCDS11031.1">
    <molecule id="O60931-1"/>
</dbReference>
<dbReference type="CCDS" id="CCDS32530.1">
    <molecule id="O60931-2"/>
</dbReference>
<dbReference type="RefSeq" id="NP_001026851.2">
    <molecule id="O60931-2"/>
    <property type="nucleotide sequence ID" value="NM_001031681.3"/>
</dbReference>
<dbReference type="RefSeq" id="NP_001361421.1">
    <molecule id="O60931-2"/>
    <property type="nucleotide sequence ID" value="NM_001374492.1"/>
</dbReference>
<dbReference type="RefSeq" id="NP_004928.2">
    <molecule id="O60931-1"/>
    <property type="nucleotide sequence ID" value="NM_004937.3"/>
</dbReference>
<dbReference type="RefSeq" id="XP_006721526.1">
    <molecule id="O60931-2"/>
    <property type="nucleotide sequence ID" value="XM_006721463.4"/>
</dbReference>
<dbReference type="RefSeq" id="XP_011521993.1">
    <molecule id="O60931-2"/>
    <property type="nucleotide sequence ID" value="XM_011523691.3"/>
</dbReference>
<dbReference type="PDB" id="8DKE">
    <property type="method" value="EM"/>
    <property type="resolution" value="3.18 A"/>
    <property type="chains" value="P=1-362"/>
</dbReference>
<dbReference type="PDB" id="8DKI">
    <property type="method" value="EM"/>
    <property type="resolution" value="3.32 A"/>
    <property type="chains" value="P=1-362"/>
</dbReference>
<dbReference type="PDB" id="8DKM">
    <property type="method" value="EM"/>
    <property type="resolution" value="3.39 A"/>
    <property type="chains" value="P=1-362"/>
</dbReference>
<dbReference type="PDB" id="8DKW">
    <property type="method" value="EM"/>
    <property type="resolution" value="3.09 A"/>
    <property type="chains" value="P=1-362"/>
</dbReference>
<dbReference type="PDB" id="8DKX">
    <property type="method" value="EM"/>
    <property type="resolution" value="3.00 A"/>
    <property type="chains" value="P=1-362"/>
</dbReference>
<dbReference type="PDB" id="8DYP">
    <property type="method" value="X-ray"/>
    <property type="resolution" value="3.40 A"/>
    <property type="chains" value="A=25-356"/>
</dbReference>
<dbReference type="PDBsum" id="8DKE"/>
<dbReference type="PDBsum" id="8DKI"/>
<dbReference type="PDBsum" id="8DKM"/>
<dbReference type="PDBsum" id="8DKW"/>
<dbReference type="PDBsum" id="8DKX"/>
<dbReference type="PDBsum" id="8DYP"/>
<dbReference type="EMDB" id="EMD-27488"/>
<dbReference type="EMDB" id="EMD-27489"/>
<dbReference type="EMDB" id="EMD-27490"/>
<dbReference type="EMDB" id="EMD-27492"/>
<dbReference type="EMDB" id="EMD-27493"/>
<dbReference type="SMR" id="O60931"/>
<dbReference type="BioGRID" id="107878">
    <property type="interactions" value="4"/>
</dbReference>
<dbReference type="FunCoup" id="O60931">
    <property type="interactions" value="929"/>
</dbReference>
<dbReference type="IntAct" id="O60931">
    <property type="interactions" value="1"/>
</dbReference>
<dbReference type="STRING" id="9606.ENSP00000371294"/>
<dbReference type="ChEMBL" id="CHEMBL4630803"/>
<dbReference type="DrugBank" id="DB00138">
    <property type="generic name" value="Cystine"/>
</dbReference>
<dbReference type="TCDB" id="2.A.43.1.1">
    <property type="family name" value="the lysosomal cystine transporter (lct) family"/>
</dbReference>
<dbReference type="GlyCosmos" id="O60931">
    <property type="glycosylation" value="7 sites, No reported glycans"/>
</dbReference>
<dbReference type="GlyGen" id="O60931">
    <property type="glycosylation" value="7 sites"/>
</dbReference>
<dbReference type="iPTMnet" id="O60931"/>
<dbReference type="PhosphoSitePlus" id="O60931"/>
<dbReference type="BioMuta" id="CTNS"/>
<dbReference type="jPOST" id="O60931"/>
<dbReference type="MassIVE" id="O60931"/>
<dbReference type="PaxDb" id="9606-ENSP00000371294"/>
<dbReference type="PeptideAtlas" id="O60931"/>
<dbReference type="ProteomicsDB" id="49677">
    <molecule id="O60931-2"/>
</dbReference>
<dbReference type="Antibodypedia" id="23081">
    <property type="antibodies" value="198 antibodies from 27 providers"/>
</dbReference>
<dbReference type="DNASU" id="1497"/>
<dbReference type="Ensembl" id="ENST00000046640.9">
    <molecule id="O60931-1"/>
    <property type="protein sequence ID" value="ENSP00000046640.4"/>
    <property type="gene ID" value="ENSG00000040531.16"/>
</dbReference>
<dbReference type="Ensembl" id="ENST00000381870.8">
    <molecule id="O60931-2"/>
    <property type="protein sequence ID" value="ENSP00000371294.3"/>
    <property type="gene ID" value="ENSG00000040531.16"/>
</dbReference>
<dbReference type="Ensembl" id="ENST00000673965.1">
    <molecule id="O60931-1"/>
    <property type="protein sequence ID" value="ENSP00000500995.1"/>
    <property type="gene ID" value="ENSG00000040531.16"/>
</dbReference>
<dbReference type="GeneID" id="1497"/>
<dbReference type="KEGG" id="hsa:1497"/>
<dbReference type="MANE-Select" id="ENST00000046640.9">
    <property type="protein sequence ID" value="ENSP00000046640.4"/>
    <property type="RefSeq nucleotide sequence ID" value="NM_004937.3"/>
    <property type="RefSeq protein sequence ID" value="NP_004928.2"/>
</dbReference>
<dbReference type="UCSC" id="uc002fwa.4">
    <molecule id="O60931-1"/>
    <property type="organism name" value="human"/>
</dbReference>
<dbReference type="AGR" id="HGNC:2518"/>
<dbReference type="CTD" id="1497"/>
<dbReference type="DisGeNET" id="1497"/>
<dbReference type="GeneCards" id="CTNS"/>
<dbReference type="GeneReviews" id="CTNS"/>
<dbReference type="HGNC" id="HGNC:2518">
    <property type="gene designation" value="CTNS"/>
</dbReference>
<dbReference type="HPA" id="ENSG00000040531">
    <property type="expression patterns" value="Low tissue specificity"/>
</dbReference>
<dbReference type="MalaCards" id="CTNS"/>
<dbReference type="MIM" id="219750">
    <property type="type" value="phenotype"/>
</dbReference>
<dbReference type="MIM" id="219800">
    <property type="type" value="phenotype"/>
</dbReference>
<dbReference type="MIM" id="219900">
    <property type="type" value="phenotype"/>
</dbReference>
<dbReference type="MIM" id="606272">
    <property type="type" value="gene"/>
</dbReference>
<dbReference type="neXtProt" id="NX_O60931"/>
<dbReference type="OpenTargets" id="ENSG00000040531"/>
<dbReference type="Orphanet" id="411629">
    <property type="disease" value="Infantile nephropathic cystinosis"/>
</dbReference>
<dbReference type="Orphanet" id="411634">
    <property type="disease" value="Juvenile nephropathic cystinosis"/>
</dbReference>
<dbReference type="Orphanet" id="411641">
    <property type="disease" value="Ocular cystinosis"/>
</dbReference>
<dbReference type="PharmGKB" id="PA27019"/>
<dbReference type="VEuPathDB" id="HostDB:ENSG00000040531"/>
<dbReference type="eggNOG" id="KOG3145">
    <property type="taxonomic scope" value="Eukaryota"/>
</dbReference>
<dbReference type="GeneTree" id="ENSGT00390000005338"/>
<dbReference type="HOGENOM" id="CLU_046327_1_0_1"/>
<dbReference type="InParanoid" id="O60931"/>
<dbReference type="OMA" id="WIDVIYT"/>
<dbReference type="OrthoDB" id="75720at2759"/>
<dbReference type="PAN-GO" id="O60931">
    <property type="GO annotations" value="3 GO annotations based on evolutionary models"/>
</dbReference>
<dbReference type="PhylomeDB" id="O60931"/>
<dbReference type="TreeFam" id="TF313589"/>
<dbReference type="PathwayCommons" id="O60931"/>
<dbReference type="Reactome" id="R-HSA-425393">
    <property type="pathway name" value="Transport of inorganic cations/anions and amino acids/oligopeptides"/>
</dbReference>
<dbReference type="Reactome" id="R-HSA-5223345">
    <property type="pathway name" value="Miscellaneous transport and binding events"/>
</dbReference>
<dbReference type="SignaLink" id="O60931"/>
<dbReference type="BioGRID-ORCS" id="1497">
    <property type="hits" value="18 hits in 1157 CRISPR screens"/>
</dbReference>
<dbReference type="ChiTaRS" id="CTNS">
    <property type="organism name" value="human"/>
</dbReference>
<dbReference type="GeneWiki" id="CTNS_(gene)"/>
<dbReference type="GenomeRNAi" id="1497"/>
<dbReference type="Pharos" id="O60931">
    <property type="development level" value="Tbio"/>
</dbReference>
<dbReference type="PRO" id="PR:O60931"/>
<dbReference type="Proteomes" id="UP000005640">
    <property type="component" value="Chromosome 17"/>
</dbReference>
<dbReference type="RNAct" id="O60931">
    <property type="molecule type" value="protein"/>
</dbReference>
<dbReference type="Bgee" id="ENSG00000040531">
    <property type="expression patterns" value="Expressed in right adrenal gland cortex and 169 other cell types or tissues"/>
</dbReference>
<dbReference type="ExpressionAtlas" id="O60931">
    <property type="expression patterns" value="baseline and differential"/>
</dbReference>
<dbReference type="GO" id="GO:0070062">
    <property type="term" value="C:extracellular exosome"/>
    <property type="evidence" value="ECO:0007005"/>
    <property type="project" value="UniProtKB"/>
</dbReference>
<dbReference type="GO" id="GO:0043231">
    <property type="term" value="C:intracellular membrane-bounded organelle"/>
    <property type="evidence" value="ECO:0000314"/>
    <property type="project" value="HPA"/>
</dbReference>
<dbReference type="GO" id="GO:0005770">
    <property type="term" value="C:late endosome"/>
    <property type="evidence" value="ECO:0000314"/>
    <property type="project" value="UniProtKB"/>
</dbReference>
<dbReference type="GO" id="GO:0005765">
    <property type="term" value="C:lysosomal membrane"/>
    <property type="evidence" value="ECO:0000314"/>
    <property type="project" value="UniProtKB"/>
</dbReference>
<dbReference type="GO" id="GO:0005764">
    <property type="term" value="C:lysosome"/>
    <property type="evidence" value="ECO:0000314"/>
    <property type="project" value="MGI"/>
</dbReference>
<dbReference type="GO" id="GO:0042470">
    <property type="term" value="C:melanosome"/>
    <property type="evidence" value="ECO:0000314"/>
    <property type="project" value="UniProtKB"/>
</dbReference>
<dbReference type="GO" id="GO:0033162">
    <property type="term" value="C:melanosome membrane"/>
    <property type="evidence" value="ECO:0007669"/>
    <property type="project" value="UniProtKB-SubCell"/>
</dbReference>
<dbReference type="GO" id="GO:0005886">
    <property type="term" value="C:plasma membrane"/>
    <property type="evidence" value="ECO:0000314"/>
    <property type="project" value="UniProtKB"/>
</dbReference>
<dbReference type="GO" id="GO:0015184">
    <property type="term" value="F:L-cystine transmembrane transporter activity"/>
    <property type="evidence" value="ECO:0000314"/>
    <property type="project" value="UniProtKB"/>
</dbReference>
<dbReference type="GO" id="GO:0015295">
    <property type="term" value="F:solute:proton symporter activity"/>
    <property type="evidence" value="ECO:0000314"/>
    <property type="project" value="UniProtKB"/>
</dbReference>
<dbReference type="GO" id="GO:0007628">
    <property type="term" value="P:adult walking behavior"/>
    <property type="evidence" value="ECO:0007669"/>
    <property type="project" value="Ensembl"/>
</dbReference>
<dbReference type="GO" id="GO:0006520">
    <property type="term" value="P:amino acid metabolic process"/>
    <property type="evidence" value="ECO:0000303"/>
    <property type="project" value="UniProtKB"/>
</dbReference>
<dbReference type="GO" id="GO:0046034">
    <property type="term" value="P:ATP metabolic process"/>
    <property type="evidence" value="ECO:0000315"/>
    <property type="project" value="UniProtKB"/>
</dbReference>
<dbReference type="GO" id="GO:0007420">
    <property type="term" value="P:brain development"/>
    <property type="evidence" value="ECO:0000315"/>
    <property type="project" value="UniProtKB"/>
</dbReference>
<dbReference type="GO" id="GO:0050890">
    <property type="term" value="P:cognition"/>
    <property type="evidence" value="ECO:0000315"/>
    <property type="project" value="UniProtKB"/>
</dbReference>
<dbReference type="GO" id="GO:0006749">
    <property type="term" value="P:glutathione metabolic process"/>
    <property type="evidence" value="ECO:0000315"/>
    <property type="project" value="UniProtKB"/>
</dbReference>
<dbReference type="GO" id="GO:0007625">
    <property type="term" value="P:grooming behavior"/>
    <property type="evidence" value="ECO:0007669"/>
    <property type="project" value="Ensembl"/>
</dbReference>
<dbReference type="GO" id="GO:0015811">
    <property type="term" value="P:L-cystine transport"/>
    <property type="evidence" value="ECO:0000314"/>
    <property type="project" value="UniProtKB"/>
</dbReference>
<dbReference type="GO" id="GO:0002088">
    <property type="term" value="P:lens development in camera-type eye"/>
    <property type="evidence" value="ECO:0007669"/>
    <property type="project" value="Ensembl"/>
</dbReference>
<dbReference type="GO" id="GO:0007616">
    <property type="term" value="P:long-term memory"/>
    <property type="evidence" value="ECO:0007669"/>
    <property type="project" value="Ensembl"/>
</dbReference>
<dbReference type="GO" id="GO:0042438">
    <property type="term" value="P:melanin biosynthetic process"/>
    <property type="evidence" value="ECO:0007669"/>
    <property type="project" value="UniProtKB-KW"/>
</dbReference>
<dbReference type="GO" id="GO:0006811">
    <property type="term" value="P:monoatomic ion transport"/>
    <property type="evidence" value="ECO:0000304"/>
    <property type="project" value="Reactome"/>
</dbReference>
<dbReference type="GO" id="GO:1904263">
    <property type="term" value="P:positive regulation of TORC1 signaling"/>
    <property type="evidence" value="ECO:0007669"/>
    <property type="project" value="Ensembl"/>
</dbReference>
<dbReference type="GO" id="GO:0015031">
    <property type="term" value="P:protein transport"/>
    <property type="evidence" value="ECO:0007669"/>
    <property type="project" value="UniProtKB-KW"/>
</dbReference>
<dbReference type="GO" id="GO:0048021">
    <property type="term" value="P:regulation of melanin biosynthetic process"/>
    <property type="evidence" value="ECO:0000315"/>
    <property type="project" value="UniProtKB"/>
</dbReference>
<dbReference type="GO" id="GO:1903432">
    <property type="term" value="P:regulation of TORC1 signaling"/>
    <property type="evidence" value="ECO:0000314"/>
    <property type="project" value="UniProtKB"/>
</dbReference>
<dbReference type="GO" id="GO:0055085">
    <property type="term" value="P:transmembrane transport"/>
    <property type="evidence" value="ECO:0000304"/>
    <property type="project" value="Reactome"/>
</dbReference>
<dbReference type="GO" id="GO:0008542">
    <property type="term" value="P:visual learning"/>
    <property type="evidence" value="ECO:0007669"/>
    <property type="project" value="Ensembl"/>
</dbReference>
<dbReference type="FunFam" id="1.20.1280.290:FF:000016">
    <property type="entry name" value="Cystinosin homolog"/>
    <property type="match status" value="1"/>
</dbReference>
<dbReference type="FunFam" id="1.20.1280.290:FF:000015">
    <property type="entry name" value="cystinosin isoform X2"/>
    <property type="match status" value="1"/>
</dbReference>
<dbReference type="Gene3D" id="1.20.1280.290">
    <property type="match status" value="1"/>
</dbReference>
<dbReference type="InterPro" id="IPR005282">
    <property type="entry name" value="LC_transporter"/>
</dbReference>
<dbReference type="InterPro" id="IPR006603">
    <property type="entry name" value="PQ-loop_rpt"/>
</dbReference>
<dbReference type="NCBIfam" id="TIGR00951">
    <property type="entry name" value="2A43"/>
    <property type="match status" value="1"/>
</dbReference>
<dbReference type="PANTHER" id="PTHR13131">
    <property type="entry name" value="CYSTINOSIN"/>
    <property type="match status" value="1"/>
</dbReference>
<dbReference type="PANTHER" id="PTHR13131:SF5">
    <property type="entry name" value="CYSTINOSIN"/>
    <property type="match status" value="1"/>
</dbReference>
<dbReference type="Pfam" id="PF04193">
    <property type="entry name" value="PQ-loop"/>
    <property type="match status" value="2"/>
</dbReference>
<dbReference type="SMART" id="SM00679">
    <property type="entry name" value="CTNS"/>
    <property type="match status" value="2"/>
</dbReference>
<accession>O60931</accession>
<accession>D3DTJ5</accession>
<accession>Q8IZ01</accession>
<accession>Q9UNK6</accession>
<evidence type="ECO:0000250" key="1">
    <source>
        <dbReference type="UniProtKB" id="P57757"/>
    </source>
</evidence>
<evidence type="ECO:0000255" key="2"/>
<evidence type="ECO:0000269" key="3">
    <source>
    </source>
</evidence>
<evidence type="ECO:0000269" key="4">
    <source>
    </source>
</evidence>
<evidence type="ECO:0000269" key="5">
    <source>
    </source>
</evidence>
<evidence type="ECO:0000269" key="6">
    <source>
    </source>
</evidence>
<evidence type="ECO:0000269" key="7">
    <source>
    </source>
</evidence>
<evidence type="ECO:0000269" key="8">
    <source>
    </source>
</evidence>
<evidence type="ECO:0000269" key="9">
    <source>
    </source>
</evidence>
<evidence type="ECO:0000269" key="10">
    <source>
    </source>
</evidence>
<evidence type="ECO:0000269" key="11">
    <source>
    </source>
</evidence>
<evidence type="ECO:0000269" key="12">
    <source>
    </source>
</evidence>
<evidence type="ECO:0000269" key="13">
    <source>
    </source>
</evidence>
<evidence type="ECO:0000269" key="14">
    <source>
    </source>
</evidence>
<evidence type="ECO:0000269" key="15">
    <source>
    </source>
</evidence>
<evidence type="ECO:0000269" key="16">
    <source>
    </source>
</evidence>
<evidence type="ECO:0000269" key="17">
    <source>
    </source>
</evidence>
<evidence type="ECO:0000269" key="18">
    <source>
    </source>
</evidence>
<evidence type="ECO:0000269" key="19">
    <source>
    </source>
</evidence>
<evidence type="ECO:0000269" key="20">
    <source>
    </source>
</evidence>
<evidence type="ECO:0000269" key="21">
    <source>
    </source>
</evidence>
<evidence type="ECO:0000269" key="22">
    <source>
    </source>
</evidence>
<evidence type="ECO:0000269" key="23">
    <source>
    </source>
</evidence>
<evidence type="ECO:0000269" key="24">
    <source>
    </source>
</evidence>
<evidence type="ECO:0000269" key="25">
    <source>
    </source>
</evidence>
<evidence type="ECO:0000269" key="26">
    <source>
    </source>
</evidence>
<evidence type="ECO:0000269" key="27">
    <source>
    </source>
</evidence>
<evidence type="ECO:0000269" key="28">
    <source>
    </source>
</evidence>
<evidence type="ECO:0000269" key="29">
    <source>
    </source>
</evidence>
<evidence type="ECO:0000269" key="30">
    <source>
    </source>
</evidence>
<evidence type="ECO:0000269" key="31">
    <source>
    </source>
</evidence>
<evidence type="ECO:0000269" key="32">
    <source ref="5"/>
</evidence>
<evidence type="ECO:0000303" key="33">
    <source>
    </source>
</evidence>
<evidence type="ECO:0000303" key="34">
    <source>
    </source>
</evidence>
<evidence type="ECO:0000303" key="35">
    <source>
    </source>
</evidence>
<evidence type="ECO:0000303" key="36">
    <source>
    </source>
</evidence>
<evidence type="ECO:0000305" key="37"/>
<evidence type="ECO:0000305" key="38">
    <source>
    </source>
</evidence>
<evidence type="ECO:0000312" key="39">
    <source>
        <dbReference type="HGNC" id="HGNC:2518"/>
    </source>
</evidence>
<evidence type="ECO:0007744" key="40">
    <source>
        <dbReference type="PDB" id="8DKE"/>
    </source>
</evidence>
<evidence type="ECO:0007744" key="41">
    <source>
        <dbReference type="PDB" id="8DKI"/>
    </source>
</evidence>
<evidence type="ECO:0007744" key="42">
    <source>
        <dbReference type="PDB" id="8DKM"/>
    </source>
</evidence>
<evidence type="ECO:0007744" key="43">
    <source>
        <dbReference type="PDB" id="8DKW"/>
    </source>
</evidence>
<evidence type="ECO:0007744" key="44">
    <source>
        <dbReference type="PDB" id="8DKX"/>
    </source>
</evidence>
<evidence type="ECO:0007744" key="45">
    <source>
        <dbReference type="PDB" id="8DYP"/>
    </source>
</evidence>
<evidence type="ECO:0007829" key="46">
    <source>
        <dbReference type="PDB" id="8DKE"/>
    </source>
</evidence>
<evidence type="ECO:0007829" key="47">
    <source>
        <dbReference type="PDB" id="8DKW"/>
    </source>
</evidence>
<evidence type="ECO:0007829" key="48">
    <source>
        <dbReference type="PDB" id="8DKX"/>
    </source>
</evidence>
<comment type="function">
    <text evidence="1 10 15 18 21 23 27 28 29">Cystine/H(+) symporter that mediates export of cystine, the oxidized dimer of cysteine, from lysosomes (PubMed:11689434, PubMed:15128704, PubMed:18337546, PubMed:22232659, PubMed:29467429, PubMed:33208952, PubMed:36113465). Plays an important role in melanin synthesis by catalyzing cystine export from melanosomes, possibly by inhibiting pheomelanin synthesis (PubMed:22649030). In addition to cystine export, also acts as a positive regulator of mTORC1 signaling in kidney proximal tubular cells, via interactions with components of the v-ATPase and Ragulator complexes (PubMed:36113465). Also involved in small GTPase-regulated vesicle trafficking and lysosomal localization of LAMP2A, independently of cystine transporter activity (By similarity).</text>
</comment>
<comment type="catalytic activity">
    <reaction evidence="10 21 29">
        <text>L-cystine(out) + H(+)(out) = L-cystine(in) + H(+)(in)</text>
        <dbReference type="Rhea" id="RHEA:66172"/>
        <dbReference type="ChEBI" id="CHEBI:15378"/>
        <dbReference type="ChEBI" id="CHEBI:35491"/>
    </reaction>
    <physiologicalReaction direction="left-to-right" evidence="10 21 29">
        <dbReference type="Rhea" id="RHEA:66173"/>
    </physiologicalReaction>
</comment>
<comment type="catalytic activity">
    <molecule>Isoform 1</molecule>
    <reaction evidence="18">
        <text>L-cystine(out) + H(+)(out) = L-cystine(in) + H(+)(in)</text>
        <dbReference type="Rhea" id="RHEA:66172"/>
        <dbReference type="ChEBI" id="CHEBI:15378"/>
        <dbReference type="ChEBI" id="CHEBI:35491"/>
    </reaction>
    <physiologicalReaction direction="left-to-right" evidence="18">
        <dbReference type="Rhea" id="RHEA:66173"/>
    </physiologicalReaction>
</comment>
<comment type="catalytic activity">
    <molecule>Isoform 2</molecule>
    <reaction evidence="18">
        <text>L-cystine(out) + H(+)(out) = L-cystine(in) + H(+)(in)</text>
        <dbReference type="Rhea" id="RHEA:66172"/>
        <dbReference type="ChEBI" id="CHEBI:15378"/>
        <dbReference type="ChEBI" id="CHEBI:35491"/>
    </reaction>
    <physiologicalReaction direction="left-to-right" evidence="18">
        <dbReference type="Rhea" id="RHEA:66173"/>
    </physiologicalReaction>
</comment>
<comment type="activity regulation">
    <text evidence="29">Switches between a lumen- and a cytosol-open conformation: pH induces conformational changes and shifts the equilibrium to facilitate the transition between the lumen- and cytosol-open conformation, thereby promoting cystine transport (PubMed:36113465). Protonation of specific aspartate residues (Asp-205, Asp-305 and Asp-346) favors the cytosol-open conformation (PubMed:36113465).</text>
</comment>
<comment type="biophysicochemical properties">
    <kinetics>
        <KM evidence="21">75 uM for cystine (at pH 5.0)</KM>
        <KM evidence="10">278 uM for cystine</KM>
    </kinetics>
</comment>
<comment type="subunit">
    <text evidence="1 24 29">Interacts with components of the V-ATPase complex (By similarity). Interacts with components of the Ragulator complex (PubMed:36113465). Interacts with RRAGA/RagA and RRAGC/RagC (By similarity). Interacts with AP-3 complex subunit mu (AP3M1 or AP3M2) (PubMed:25753619).</text>
</comment>
<comment type="interaction">
    <interactant intactId="EBI-19888994">
        <id>O60931-2</id>
    </interactant>
    <interactant intactId="EBI-744239">
        <id>Q14749</id>
        <label>GNMT</label>
    </interactant>
    <organismsDiffer>false</organismsDiffer>
    <experiments>3</experiments>
</comment>
<comment type="subcellular location">
    <molecule>Isoform 1</molecule>
    <subcellularLocation>
        <location evidence="9 10 15 17 24 26">Lysosome membrane</location>
        <topology evidence="29">Multi-pass membrane protein</topology>
    </subcellularLocation>
    <subcellularLocation>
        <location evidence="23">Melanosome membrane</location>
        <topology evidence="29">Multi-pass membrane protein</topology>
    </subcellularLocation>
    <text evidence="24">AP-3 complex is required for localization to the lysosome.</text>
</comment>
<comment type="subcellular location">
    <molecule>Isoform 2</molecule>
    <subcellularLocation>
        <location evidence="18 25">Lysosome membrane</location>
        <topology evidence="29">Multi-pass membrane protein</topology>
    </subcellularLocation>
    <subcellularLocation>
        <location evidence="18 25">Cell membrane</location>
        <topology evidence="29">Multi-pass membrane protein</topology>
    </subcellularLocation>
</comment>
<comment type="alternative products">
    <event type="alternative splicing"/>
    <isoform>
        <id>O60931-1</id>
        <name>1</name>
        <sequence type="displayed"/>
    </isoform>
    <isoform>
        <id>O60931-2</id>
        <name>2</name>
        <name evidence="35">cystinosin-LKG</name>
        <sequence type="described" ref="VSP_038377"/>
    </isoform>
</comment>
<comment type="tissue specificity">
    <text evidence="23">Strongly expressed in pancreas, kidney (adult and fetal), skeletal muscle, melanocytes and keratinocytes (PubMed:22649030). Expressed at lower levels in placenta and heart. Weakly expressed in lung, liver and brain (adult and fetal) (PubMed:22649030).</text>
</comment>
<comment type="tissue specificity">
    <molecule>Isoform 2</molecule>
    <text evidence="23">Represents 5-20 % of CTNS transcripts, with the exception of the testis that expresses both isoforms in equal proportions.</text>
</comment>
<comment type="domain">
    <text evidence="9">The lysosomal targeting motif, together with the second PQ-loop mediate targeting to the lysosome.</text>
</comment>
<comment type="disease" evidence="5 6 10 11 12 13 15 19 20 21 22 29 31">
    <disease id="DI-01467">
        <name>Cystinosis, nephropathic type</name>
        <acronym>CTNS</acronym>
        <description>A form of cystinosis, a lysosomal storage disease due to defective transport of cystine across the lysosomal membrane. This results in cystine accumulation and crystallization in the cells causing widespread tissue damage. The classical nephropathic form has onset in the first year of life and is characterized by a polyuro-polydipsic syndrome, marked height-weight growth delay, generalized impaired proximal tubular reabsorptive capacity, with severe fluid-electrolyte balance alterations, renal failure, ocular symptoms and other systemic complications.</description>
        <dbReference type="MIM" id="219800"/>
    </disease>
    <text>The disease is caused by variants affecting the gene represented in this entry.</text>
</comment>
<comment type="disease" evidence="7 15">
    <disease id="DI-02893">
        <name>Cystinosis, adult, non-nephropathic type</name>
        <acronym>CTNSANN</acronym>
        <description>A form of cystinosis, a lysosomal storage disease due to defective transport of cystine across the lysosomal membrane. This results in cystine accumulation and crystallization in the cells causing widespread tissue damage. Cystinosis adult non-nephropathic type is characterized by ocular features and a benign course. Patients manifest mild photophobia due to conjunctival and corneal cystine crystals.</description>
        <dbReference type="MIM" id="219750"/>
    </disease>
    <text>The disease is caused by variants affecting the gene represented in this entry.</text>
</comment>
<comment type="disease" evidence="4 6 12 15 26 29 31">
    <disease id="DI-02894">
        <name>Cystinosis, late-onset juvenile or adolescent nephropathic type</name>
        <acronym>CTNSJAN</acronym>
        <description>A form of cystinosis, a lysosomal storage disease due to defective transport of cystine across the lysosomal membrane. This results in cystine accumulation and crystallization in the cells causing widespread tissue damage. Late-onset juvenile or adolescent nephropathic cystinosis is an intermediated form, manifesting first at age 10 to 12 years with proteinuria due to glomerular damage rather than with the manifestations of tubular damage that occur first in infantile cystinosis. There is no excess amino aciduria and stature is normal. Photophobia, late development of pigmentary retinopathy, and chronic headaches are features.</description>
        <dbReference type="MIM" id="219900"/>
    </disease>
    <text>The disease is caused by variants affecting the gene represented in this entry.</text>
</comment>
<comment type="similarity">
    <text evidence="37">Belongs to the cystinosin family.</text>
</comment>
<feature type="signal peptide" evidence="26">
    <location>
        <begin position="1"/>
        <end position="22"/>
    </location>
</feature>
<feature type="chain" id="PRO_0000205514" description="Cystinosin">
    <location>
        <begin position="23"/>
        <end position="367"/>
    </location>
</feature>
<feature type="topological domain" description="Lumenal" evidence="29">
    <location>
        <begin position="23"/>
        <end position="125"/>
    </location>
</feature>
<feature type="transmembrane region" description="Helical" evidence="29 40 41 42 43 44 45">
    <location>
        <begin position="126"/>
        <end position="150"/>
    </location>
</feature>
<feature type="topological domain" description="Cytoplasmic" evidence="29">
    <location>
        <begin position="151"/>
        <end position="159"/>
    </location>
</feature>
<feature type="transmembrane region" description="Helical" evidence="29 40 41 42 43 44 45">
    <location>
        <begin position="160"/>
        <end position="179"/>
    </location>
</feature>
<feature type="topological domain" description="Lumenal" evidence="29">
    <location>
        <begin position="180"/>
        <end position="202"/>
    </location>
</feature>
<feature type="transmembrane region" description="Helical" evidence="29 40 41 42 43 44 45">
    <location>
        <begin position="203"/>
        <end position="225"/>
    </location>
</feature>
<feature type="topological domain" description="Cytoplasmic" evidence="29">
    <location>
        <begin position="226"/>
        <end position="234"/>
    </location>
</feature>
<feature type="transmembrane region" description="Helical" evidence="29 40 41 42 43 44 45">
    <location>
        <begin position="235"/>
        <end position="257"/>
    </location>
</feature>
<feature type="topological domain" description="Lumenal" evidence="29">
    <location>
        <begin position="258"/>
        <end position="263"/>
    </location>
</feature>
<feature type="transmembrane region" description="Helical" evidence="29 40 41 42 43 44 45">
    <location>
        <begin position="264"/>
        <end position="289"/>
    </location>
</feature>
<feature type="topological domain" description="Cytoplasmic" evidence="29">
    <location>
        <begin position="290"/>
        <end position="298"/>
    </location>
</feature>
<feature type="transmembrane region" description="Helical" evidence="29 40 41 42 43 44 45">
    <location>
        <begin position="299"/>
        <end position="308"/>
    </location>
</feature>
<feature type="topological domain" description="Lumenal" evidence="29">
    <location>
        <begin position="309"/>
        <end position="331"/>
    </location>
</feature>
<feature type="transmembrane region" description="Helical" evidence="29 40 41 42 43 44 45">
    <location>
        <begin position="332"/>
        <end position="354"/>
    </location>
</feature>
<feature type="topological domain" description="Cytoplasmic" evidence="29">
    <location>
        <begin position="355"/>
        <end position="367"/>
    </location>
</feature>
<feature type="domain" description="PQ-loop 1" evidence="2">
    <location>
        <begin position="123"/>
        <end position="189"/>
    </location>
</feature>
<feature type="domain" description="PQ-loop 2" evidence="2">
    <location>
        <begin position="263"/>
        <end position="328"/>
    </location>
</feature>
<feature type="short sequence motif" description="Lysosomal targeting motif" evidence="2 9">
    <location>
        <begin position="362"/>
        <end position="366"/>
    </location>
</feature>
<feature type="binding site" evidence="29 42">
    <location>
        <position position="166"/>
    </location>
    <ligand>
        <name>L-cystine</name>
        <dbReference type="ChEBI" id="CHEBI:35491"/>
    </ligand>
</feature>
<feature type="binding site" evidence="38">
    <location>
        <position position="205"/>
    </location>
    <ligand>
        <name>H(+)</name>
        <dbReference type="ChEBI" id="CHEBI:15378"/>
    </ligand>
</feature>
<feature type="binding site" evidence="29">
    <location>
        <position position="273"/>
    </location>
    <ligand>
        <name>L-cystine</name>
        <dbReference type="ChEBI" id="CHEBI:35491"/>
    </ligand>
</feature>
<feature type="binding site" evidence="29">
    <location>
        <position position="280"/>
    </location>
    <ligand>
        <name>L-cystine</name>
        <dbReference type="ChEBI" id="CHEBI:35491"/>
    </ligand>
</feature>
<feature type="binding site" evidence="29">
    <location>
        <position position="281"/>
    </location>
    <ligand>
        <name>L-cystine</name>
        <dbReference type="ChEBI" id="CHEBI:35491"/>
    </ligand>
</feature>
<feature type="binding site" evidence="29 42">
    <location>
        <position position="301"/>
    </location>
    <ligand>
        <name>L-cystine</name>
        <dbReference type="ChEBI" id="CHEBI:35491"/>
    </ligand>
</feature>
<feature type="binding site" description="protonated residue following cystine-binding" evidence="21 38">
    <location>
        <position position="305"/>
    </location>
    <ligand>
        <name>H(+)</name>
        <dbReference type="ChEBI" id="CHEBI:15378"/>
    </ligand>
</feature>
<feature type="binding site" evidence="29">
    <location>
        <position position="305"/>
    </location>
    <ligand>
        <name>L-cystine</name>
        <dbReference type="ChEBI" id="CHEBI:35491"/>
    </ligand>
</feature>
<feature type="binding site" evidence="38">
    <location>
        <position position="346"/>
    </location>
    <ligand>
        <name>H(+)</name>
        <dbReference type="ChEBI" id="CHEBI:15378"/>
    </ligand>
</feature>
<feature type="glycosylation site" description="N-linked (GlcNAc...) (high mannose) asparagine" evidence="2 26">
    <location>
        <position position="36"/>
    </location>
</feature>
<feature type="glycosylation site" description="N-linked (GlcNAc...) (high mannose) asparagine" evidence="2 26">
    <location>
        <position position="41"/>
    </location>
</feature>
<feature type="glycosylation site" description="N-linked (GlcNAc...) (high mannose) asparagine" evidence="2 26">
    <location>
        <position position="51"/>
    </location>
</feature>
<feature type="glycosylation site" description="N-linked (GlcNAc...) asparagine" evidence="2 26">
    <location>
        <position position="66"/>
    </location>
</feature>
<feature type="glycosylation site" description="N-linked (GlcNAc...) (high mannose) asparagine" evidence="2 26">
    <location>
        <position position="84"/>
    </location>
</feature>
<feature type="glycosylation site" description="N-linked (GlcNAc...) (high mannose) asparagine" evidence="2 26">
    <location>
        <position position="104"/>
    </location>
</feature>
<feature type="glycosylation site" description="N-linked (GlcNAc...) (high mannose) asparagine" evidence="2 26">
    <location>
        <position position="107"/>
    </location>
</feature>
<feature type="splice variant" id="VSP_038377" description="In isoform 2." evidence="33 34">
    <original>YDQLN</original>
    <variation>LQAARTGSGSRLRQDWAPSLQPKALPQTTSVSASSLKG</variation>
    <location>
        <begin position="363"/>
        <end position="367"/>
    </location>
</feature>
<feature type="sequence variant" id="VAR_010285" description="Does not affect cystine transport; dbSNP:rs35086888." evidence="6 15">
    <original>V</original>
    <variation>I</variation>
    <location>
        <position position="42"/>
    </location>
</feature>
<feature type="sequence variant" id="VAR_010674" description="In CTNSJAN; protein misfolding leading to decreased stability; decreased cystine transport." evidence="15 26 31">
    <location>
        <begin position="67"/>
        <end position="73"/>
    </location>
</feature>
<feature type="sequence variant" id="VAR_037318" description="In CTNS; atypical; does not affect cystine transport; dbSNP:rs121908129." evidence="12 15">
    <original>G</original>
    <variation>V</variation>
    <location>
        <position position="110"/>
    </location>
</feature>
<feature type="sequence variant" id="VAR_010677" description="In CTNS; does not affect cystine transport; dbSNP:rs886040970." evidence="5 15">
    <original>I</original>
    <variation>F</variation>
    <location>
        <position position="133"/>
    </location>
</feature>
<feature type="sequence variant" id="VAR_010678" description="In CTNS; atypical; abolished cystine transport; dbSNP:rs267606754." evidence="6 15">
    <original>S</original>
    <variation>F</variation>
    <location>
        <position position="139"/>
    </location>
</feature>
<feature type="sequence variant" id="VAR_084186" description="In CTNS; abolished cystine transport." evidence="15">
    <original>S</original>
    <variation>F</variation>
    <location>
        <position position="141"/>
    </location>
</feature>
<feature type="sequence variant" id="VAR_067490" description="In CTNS; dbSNP:rs1555563010." evidence="20">
    <original>R</original>
    <variation>G</variation>
    <location>
        <position position="151"/>
    </location>
</feature>
<feature type="sequence variant" id="VAR_010679" description="In CTNSJAN; decreased cystine transport." evidence="6 15">
    <original>S</original>
    <variation>SPCS</variation>
    <location>
        <position position="154"/>
    </location>
</feature>
<feature type="sequence variant" id="VAR_067491" description="In CTNS." evidence="20">
    <original>G</original>
    <variation>D</variation>
    <location>
        <position position="157"/>
    </location>
</feature>
<feature type="sequence variant" id="VAR_010680" description="In CTNS; abolished cystine transport; dbSNP:rs113994206." evidence="5 15">
    <original>L</original>
    <variation>P</variation>
    <location>
        <position position="158"/>
    </location>
</feature>
<feature type="sequence variant" id="VAR_010286" description="In CTNS; abolished cystine transport; dbSNP:rs121908126." evidence="15 31">
    <original>G</original>
    <variation>D</variation>
    <location>
        <position position="169"/>
    </location>
</feature>
<feature type="sequence variant" id="VAR_067492" description="In CTNS; dbSNP:rs1555563446." evidence="20">
    <original>Y</original>
    <variation>C</variation>
    <location>
        <position position="173"/>
    </location>
</feature>
<feature type="sequence variant" id="VAR_067493" description="In CTNS; abolished cystine transport." evidence="15 19">
    <original>N</original>
    <variation>S</variation>
    <location>
        <position position="177"/>
    </location>
</feature>
<feature type="sequence variant" id="VAR_037319" description="In CTNSJAN." evidence="12">
    <original>N</original>
    <variation>T</variation>
    <location>
        <position position="177"/>
    </location>
</feature>
<feature type="sequence variant" id="VAR_010681" description="In CTNS; does not affect cystine transport; dbSNP:rs764168489." evidence="15 31">
    <original>W</original>
    <variation>R</variation>
    <location>
        <position position="182"/>
    </location>
</feature>
<feature type="sequence variant" id="VAR_010682" description="In CTNSANN; decreased cystine transport; dbSNP:rs113994207." evidence="7 15">
    <original>G</original>
    <variation>R</variation>
    <location>
        <position position="197"/>
    </location>
</feature>
<feature type="sequence variant" id="VAR_037320" description="In CTNSJAN; decreased cystine transport." evidence="12 15">
    <original>P</original>
    <variation>L</variation>
    <location>
        <position position="200"/>
    </location>
</feature>
<feature type="sequence variant" id="VAR_010683" description="In CTNS; abolished cystine transport; abolished steady-state transport current; decreased midpoint potential; dbSNP:rs113994208." evidence="15 21 31">
    <original>D</original>
    <variation>N</variation>
    <location>
        <position position="205"/>
    </location>
</feature>
<feature type="sequence variant" id="VAR_010684" description="In CTNS; abolished cystine transport." evidence="6 15 31">
    <location>
        <position position="205"/>
    </location>
</feature>
<feature type="sequence variant" id="VAR_037321" description="In CTNS; partial relocation to the cell membrane; abolished cystine transport; dbSNP:rs1327959008." evidence="12 15">
    <original>Q</original>
    <variation>R</variation>
    <location>
        <position position="222"/>
    </location>
</feature>
<feature type="sequence variant" id="VAR_060371" description="Slightly decreased cystine transport; dbSNP:rs161400." evidence="3 8 13 14 15 16 30 32">
    <original>T</original>
    <variation>I</variation>
    <location>
        <position position="260"/>
    </location>
</feature>
<feature type="sequence variant" id="VAR_010689" description="In CTNS; abolished cystine transport." evidence="6 15">
    <location>
        <position position="270"/>
    </location>
</feature>
<feature type="sequence variant" id="VAR_010287" description="In CTNSJAN; abolished cystine transport." evidence="4 15 29">
    <original>K</original>
    <variation>R</variation>
    <location>
        <position position="280"/>
    </location>
</feature>
<feature type="sequence variant" id="VAR_067494" description="In CTNS; dbSNP:rs922106812." evidence="13">
    <original>M</original>
    <variation>I</variation>
    <location>
        <position position="287"/>
    </location>
</feature>
<feature type="sequence variant" id="VAR_037322" description="In CTNS; abolished cystine transport." evidence="12 15">
    <original>N</original>
    <variation>K</variation>
    <location>
        <position position="288"/>
    </location>
</feature>
<feature type="sequence variant" id="VAR_012314" description="Found in patients with cystinosis; uncertain significance; dbSNP:rs1800527." evidence="31">
    <original>K</original>
    <variation>R</variation>
    <location>
        <position position="292"/>
    </location>
</feature>
<feature type="sequence variant" id="VAR_012315" description="In CTNS; does not affect cystine transport; dbSNP:rs1212133760." evidence="15 31">
    <original>S</original>
    <variation>N</variation>
    <location>
        <position position="298"/>
    </location>
</feature>
<feature type="sequence variant" id="VAR_010690" description="In CTNS; dbSNP:rs1263951539." evidence="31">
    <original>D</original>
    <variation>G</variation>
    <location>
        <position position="305"/>
    </location>
</feature>
<feature type="sequence variant" id="VAR_010691" description="In CTNS; abolished cystine transport." evidence="6 15">
    <original>D</original>
    <variation>Y</variation>
    <location>
        <position position="305"/>
    </location>
</feature>
<feature type="sequence variant" id="VAR_010692" description="In CTNS; abolished cystine transport; dbSNP:rs746307931." evidence="6 10 13 15 21 31">
    <original>G</original>
    <variation>R</variation>
    <location>
        <position position="308"/>
    </location>
</feature>
<feature type="sequence variant" id="VAR_067495" description="In CTNS; dbSNP:rs908965524." evidence="11">
    <original>G</original>
    <variation>V</variation>
    <location>
        <position position="308"/>
    </location>
</feature>
<feature type="sequence variant" id="VAR_067496" description="In CTNS." evidence="22">
    <original>G</original>
    <variation>D</variation>
    <location>
        <position position="309"/>
    </location>
</feature>
<feature type="sequence variant" id="VAR_010288" description="In CTNSJAN; abolished cystine transport; dbSNP:rs121908128." evidence="4 15 22">
    <original>N</original>
    <variation>K</variation>
    <location>
        <position position="323"/>
    </location>
</feature>
<feature type="sequence variant" id="VAR_067497" description="In CTNS." evidence="13">
    <original>G</original>
    <variation>R</variation>
    <location>
        <position position="337"/>
    </location>
</feature>
<feature type="sequence variant" id="VAR_010694" description="In CTNS; abolished cystine transport." evidence="6 15">
    <original>L</original>
    <variation>P</variation>
    <location>
        <position position="338"/>
    </location>
</feature>
<feature type="sequence variant" id="VAR_067498" description="In CTNS." evidence="19">
    <original>L</original>
    <variation>R</variation>
    <location>
        <position position="338"/>
    </location>
</feature>
<feature type="sequence variant" id="VAR_010695" description="In CTNS; abolished cystine transport; dbSNP:rs121908127." evidence="6 11 13 15 31">
    <original>G</original>
    <variation>R</variation>
    <location>
        <position position="339"/>
    </location>
</feature>
<feature type="sequence variant" id="VAR_010697" description="In CTNS; partial relocation to the cell membrane; abolished cystine transport." evidence="6 15">
    <location>
        <begin position="343"/>
        <end position="346"/>
    </location>
</feature>
<feature type="sequence variant" id="VAR_037323" description="In CTNS; partial relocation to the cell membrane; abolished cystine transport." evidence="12 15">
    <location>
        <begin position="346"/>
        <end position="349"/>
    </location>
</feature>
<feature type="sequence variant" id="VAR_010698" description="In CTNS; atypical; slightly decreased cystine transport; abolished pH-dependent conformational shift; dbSNP:rs757535731." evidence="6 15 29">
    <original>D</original>
    <variation>N</variation>
    <location>
        <position position="346"/>
    </location>
</feature>
<feature type="sequence variant" id="VAR_037324" description="In CTNS; abolished cystine transport." evidence="12 15">
    <original>F</original>
    <variation>FDVEF</variation>
    <location>
        <position position="349"/>
    </location>
</feature>
<feature type="mutagenesis site" description="Decreased glycosylation." evidence="26">
    <original>N</original>
    <variation>A</variation>
    <location>
        <position position="66"/>
    </location>
</feature>
<feature type="mutagenesis site" description="Gain-of-function mutant that shows higher transport of cystine." evidence="27">
    <original>G</original>
    <variation>S</variation>
    <variation>D</variation>
    <location>
        <position position="131"/>
    </location>
</feature>
<feature type="mutagenesis site" description="Nearly abolished cystine transport." evidence="29">
    <original>Y</original>
    <variation>A</variation>
    <variation>F</variation>
    <location>
        <position position="134"/>
    </location>
</feature>
<feature type="mutagenesis site" description="Gain-of-function mutant that shows higher transport of cystine." evidence="27">
    <original>A</original>
    <variation>V</variation>
    <location>
        <position position="137"/>
    </location>
</feature>
<feature type="mutagenesis site" description="Abolished cystine transport." evidence="29">
    <original>W</original>
    <variation>F</variation>
    <location>
        <position position="138"/>
    </location>
</feature>
<feature type="mutagenesis site" description="Abolished cystine transport." evidence="29">
    <original>F</original>
    <variation>A</variation>
    <location>
        <position position="142"/>
    </location>
</feature>
<feature type="mutagenesis site" description="Slightly decreased midpoint potential. Impaired dielectric distance." evidence="21">
    <original>Y</original>
    <variation>F</variation>
    <location>
        <position position="143"/>
    </location>
</feature>
<feature type="mutagenesis site" description="Increased cystine uptake activity." evidence="29">
    <original>Q</original>
    <variation>A</variation>
    <location>
        <position position="145"/>
    </location>
</feature>
<feature type="mutagenesis site" description="Impaired dielectric distance." evidence="21">
    <original>R</original>
    <variation>Q</variation>
    <location>
        <position position="152"/>
    </location>
</feature>
<feature type="mutagenesis site" description="Strongly reduced steady-state transport current. Slightly decreased midpoint potential." evidence="21">
    <original>D</original>
    <variation>N</variation>
    <location>
        <position position="161"/>
    </location>
</feature>
<feature type="mutagenesis site" description="Abolished cystine transport." evidence="29">
    <original>N</original>
    <variation>A</variation>
    <location>
        <position position="166"/>
    </location>
</feature>
<feature type="mutagenesis site" description="Strongly decreased cystine transport." evidence="29">
    <original>F</original>
    <variation>A</variation>
    <location>
        <position position="170"/>
    </location>
</feature>
<feature type="mutagenesis site" description="Nearly abolished cystine transport. Impaired pH-dependent conformational shift." evidence="29">
    <original>D</original>
    <variation>A</variation>
    <variation>N</variation>
    <location>
        <position position="205"/>
    </location>
</feature>
<feature type="mutagenesis site" description="Accelerated the time course." evidence="21">
    <original>H</original>
    <variation>F</variation>
    <location>
        <position position="211"/>
    </location>
</feature>
<feature type="mutagenesis site" description="Gain-of-function mutant that shows higher transport of cystine." evidence="27">
    <original>S</original>
    <variation>T</variation>
    <location>
        <position position="270"/>
    </location>
</feature>
<feature type="mutagenesis site" description="Abolished cystine transport." evidence="29">
    <original>K</original>
    <variation>Q</variation>
    <location>
        <position position="273"/>
    </location>
</feature>
<feature type="mutagenesis site" description="Gain-of-function mutant that shows higher transport of cystine." evidence="27">
    <original>L</original>
    <variation>F</variation>
    <location>
        <position position="274"/>
    </location>
</feature>
<feature type="mutagenesis site" description="In delta(A) mutant; abolished localization to the lysosome; when associated with deletion of 362-G--L-366." evidence="9">
    <location>
        <begin position="280"/>
        <end position="288"/>
    </location>
</feature>
<feature type="mutagenesis site" description="In mu(a) mutant; abolished localization to the lysosome; when associated with deletion of 362-G--L-366." evidence="9">
    <original>YFPQ</original>
    <variation>AAAA</variation>
    <location>
        <begin position="281"/>
        <end position="284"/>
    </location>
</feature>
<feature type="mutagenesis site" description="Strongly decreased cystine transport. Decreased midpoint potential. Accelerated the time course." evidence="21 29">
    <original>Y</original>
    <variation>F</variation>
    <location>
        <position position="281"/>
    </location>
</feature>
<feature type="mutagenesis site" description="Increased cystine uptake activity." evidence="29">
    <original>Q</original>
    <variation>A</variation>
    <location>
        <position position="284"/>
    </location>
</feature>
<feature type="mutagenesis site" description="In mu(b) mutant; does not abolish localization to the lysosome; when associated with deletion of 362-G--L-366." evidence="9">
    <original>YMNF</original>
    <variation>AAAA</variation>
    <location>
        <begin position="286"/>
        <end position="289"/>
    </location>
</feature>
<feature type="mutagenesis site" description="In delta(B) mutant; does not abolish localization to the lysosome; when associated with deletion of 362-G--L-366." evidence="9">
    <location>
        <begin position="289"/>
        <end position="298"/>
    </location>
</feature>
<feature type="mutagenesis site" description="Strongly decreased cystine transport." evidence="29">
    <original>N</original>
    <variation>A</variation>
    <location>
        <position position="301"/>
    </location>
</feature>
<feature type="mutagenesis site" description="Abolished steady-state transport current." evidence="21">
    <original>D</original>
    <variation>E</variation>
    <location>
        <position position="305"/>
    </location>
</feature>
<feature type="mutagenesis site" description="Abolished cystine transport. Abolished transient cxurrents. Abolished steady-state transport current." evidence="21 29">
    <original>D</original>
    <variation>N</variation>
    <location>
        <position position="305"/>
    </location>
</feature>
<feature type="mutagenesis site" description="Gain-of-function mutant that shows higher transport of cystine." evidence="27">
    <original>G</original>
    <variation>C</variation>
    <variation>S</variation>
    <location>
        <position position="309"/>
    </location>
</feature>
<feature type="mutagenesis site" description="Gain-of-function mutant that shows higher transport of cystine." evidence="27">
    <original>S</original>
    <variation>N</variation>
    <location>
        <position position="312"/>
    </location>
</feature>
<feature type="mutagenesis site" description="Strongly decreased cystine transport." evidence="29">
    <original>Q</original>
    <variation>A</variation>
    <location>
        <position position="319"/>
    </location>
</feature>
<feature type="mutagenesis site" description="Nearly abolished cystine transport." evidence="29">
    <original>K</original>
    <variation>A</variation>
    <location>
        <position position="335"/>
    </location>
</feature>
<feature type="mutagenesis site" description="Abolished steady-state transport current. Decreased midpoint potential. Impaired dielectric distance. Accelerated the time course." evidence="21">
    <original>K</original>
    <variation>Q</variation>
    <location>
        <position position="335"/>
    </location>
</feature>
<feature type="mutagenesis site" description="Strongly reduced but not abolished localization to the lysosome, leading to partial relocation to the cell membrane. Abolished localization to the lysosome; when associated with 281-A--A-284 or deletion of 280-K--N-288. Does not abolish localization to the lysosome; when associated with 286-A--A-289 or deletion of 289-F--S-298." evidence="9 27">
    <location>
        <begin position="362"/>
        <end position="366"/>
    </location>
</feature>
<feature type="mutagenesis site" description="Does not affect localization to the lysosome." evidence="9">
    <original>G</original>
    <variation>A</variation>
    <location>
        <position position="362"/>
    </location>
</feature>
<feature type="mutagenesis site" description="Strongly reduced but not abolished localization to the lysosome, leading to partial relocation to the cell membrane." evidence="9 27">
    <original>Y</original>
    <variation>A</variation>
    <location>
        <position position="363"/>
    </location>
</feature>
<feature type="mutagenesis site" description="Does not affect localization to the lysosome." evidence="9">
    <original>D</original>
    <variation>A</variation>
    <location>
        <position position="364"/>
    </location>
</feature>
<feature type="mutagenesis site" description="Does not affect localization to the lysosome." evidence="9">
    <original>Q</original>
    <variation>A</variation>
    <location>
        <position position="365"/>
    </location>
</feature>
<feature type="mutagenesis site" description="Strongly reduced but not abolished localization to the lysosome, leading to partial relocation to the cell membrane." evidence="9 27">
    <original>L</original>
    <variation>A</variation>
    <location>
        <position position="366"/>
    </location>
</feature>
<feature type="strand" evidence="48">
    <location>
        <begin position="30"/>
        <end position="35"/>
    </location>
</feature>
<feature type="strand" evidence="48">
    <location>
        <begin position="39"/>
        <end position="43"/>
    </location>
</feature>
<feature type="strand" evidence="48">
    <location>
        <begin position="45"/>
        <end position="48"/>
    </location>
</feature>
<feature type="strand" evidence="48">
    <location>
        <begin position="54"/>
        <end position="56"/>
    </location>
</feature>
<feature type="strand" evidence="48">
    <location>
        <begin position="58"/>
        <end position="62"/>
    </location>
</feature>
<feature type="strand" evidence="48">
    <location>
        <begin position="64"/>
        <end position="67"/>
    </location>
</feature>
<feature type="strand" evidence="48">
    <location>
        <begin position="69"/>
        <end position="71"/>
    </location>
</feature>
<feature type="strand" evidence="48">
    <location>
        <begin position="76"/>
        <end position="78"/>
    </location>
</feature>
<feature type="strand" evidence="48">
    <location>
        <begin position="86"/>
        <end position="91"/>
    </location>
</feature>
<feature type="strand" evidence="48">
    <location>
        <begin position="93"/>
        <end position="101"/>
    </location>
</feature>
<feature type="strand" evidence="48">
    <location>
        <begin position="106"/>
        <end position="108"/>
    </location>
</feature>
<feature type="strand" evidence="48">
    <location>
        <begin position="112"/>
        <end position="119"/>
    </location>
</feature>
<feature type="helix" evidence="48">
    <location>
        <begin position="121"/>
        <end position="138"/>
    </location>
</feature>
<feature type="turn" evidence="47">
    <location>
        <begin position="139"/>
        <end position="141"/>
    </location>
</feature>
<feature type="helix" evidence="48">
    <location>
        <begin position="142"/>
        <end position="152"/>
    </location>
</feature>
<feature type="strand" evidence="48">
    <location>
        <begin position="156"/>
        <end position="158"/>
    </location>
</feature>
<feature type="helix" evidence="48">
    <location>
        <begin position="160"/>
        <end position="181"/>
    </location>
</feature>
<feature type="helix" evidence="48">
    <location>
        <begin position="184"/>
        <end position="193"/>
    </location>
</feature>
<feature type="helix" evidence="48">
    <location>
        <begin position="203"/>
        <end position="225"/>
    </location>
</feature>
<feature type="helix" evidence="48">
    <location>
        <begin position="235"/>
        <end position="257"/>
    </location>
</feature>
<feature type="strand" evidence="48">
    <location>
        <begin position="258"/>
        <end position="260"/>
    </location>
</feature>
<feature type="turn" evidence="47">
    <location>
        <begin position="261"/>
        <end position="263"/>
    </location>
</feature>
<feature type="helix" evidence="48">
    <location>
        <begin position="264"/>
        <end position="290"/>
    </location>
</feature>
<feature type="helix" evidence="48">
    <location>
        <begin position="299"/>
        <end position="322"/>
    </location>
</feature>
<feature type="turn" evidence="46">
    <location>
        <begin position="328"/>
        <end position="331"/>
    </location>
</feature>
<feature type="turn" evidence="48">
    <location>
        <begin position="333"/>
        <end position="338"/>
    </location>
</feature>
<feature type="helix" evidence="48">
    <location>
        <begin position="339"/>
        <end position="355"/>
    </location>
</feature>
<feature type="mutagenesis site" description="Abolished localization to the cell membrane. Does not affect cystine transport." evidence="25">
    <location sequence="O60931-2">
        <begin position="396"/>
        <end position="400"/>
    </location>
</feature>
<reference key="1">
    <citation type="journal article" date="1998" name="Nat. Genet.">
        <title>A novel gene encoding an integral membrane protein is mutated in nephropathic cystinosis.</title>
        <authorList>
            <person name="Town M."/>
            <person name="Jean G."/>
            <person name="Cherqui S."/>
            <person name="Attard M."/>
            <person name="Forestier L."/>
            <person name="Whitmore S.A."/>
            <person name="Callen D.F."/>
            <person name="Gribouval O."/>
            <person name="Broyer M."/>
            <person name="Bates G.P."/>
            <person name="van 't Hoff W."/>
            <person name="Antignac C."/>
        </authorList>
    </citation>
    <scope>NUCLEOTIDE SEQUENCE [GENOMIC DNA / MRNA] (ISOFORM 1)</scope>
    <scope>VARIANT ILE-260</scope>
    <source>
        <tissue>Kidney</tissue>
    </source>
</reference>
<reference key="2">
    <citation type="journal article" date="2000" name="Genome Res.">
        <title>The genomic region encompassing the nephropathic cystinosis gene (CTNS): complete sequencing of a 200-kb segment and discovery of a novel gene within the common cystinosis-causing deletion.</title>
        <authorList>
            <person name="Touchman J.W."/>
            <person name="Anikster Y."/>
            <person name="Dietrich N.L."/>
            <person name="Maduro V.V.B."/>
            <person name="McDowell G."/>
            <person name="Shotelersuk V."/>
            <person name="Bouffard G.G."/>
            <person name="Beckstrom-Sternberg S.M."/>
            <person name="Gahl W.A."/>
            <person name="Green E.D."/>
        </authorList>
    </citation>
    <scope>NUCLEOTIDE SEQUENCE [GENOMIC DNA]</scope>
    <scope>VARIANT ILE-260</scope>
</reference>
<reference key="3">
    <citation type="journal article" date="2004" name="Nat. Genet.">
        <title>Complete sequencing and characterization of 21,243 full-length human cDNAs.</title>
        <authorList>
            <person name="Ota T."/>
            <person name="Suzuki Y."/>
            <person name="Nishikawa T."/>
            <person name="Otsuki T."/>
            <person name="Sugiyama T."/>
            <person name="Irie R."/>
            <person name="Wakamatsu A."/>
            <person name="Hayashi K."/>
            <person name="Sato H."/>
            <person name="Nagai K."/>
            <person name="Kimura K."/>
            <person name="Makita H."/>
            <person name="Sekine M."/>
            <person name="Obayashi M."/>
            <person name="Nishi T."/>
            <person name="Shibahara T."/>
            <person name="Tanaka T."/>
            <person name="Ishii S."/>
            <person name="Yamamoto J."/>
            <person name="Saito K."/>
            <person name="Kawai Y."/>
            <person name="Isono Y."/>
            <person name="Nakamura Y."/>
            <person name="Nagahari K."/>
            <person name="Murakami K."/>
            <person name="Yasuda T."/>
            <person name="Iwayanagi T."/>
            <person name="Wagatsuma M."/>
            <person name="Shiratori A."/>
            <person name="Sudo H."/>
            <person name="Hosoiri T."/>
            <person name="Kaku Y."/>
            <person name="Kodaira H."/>
            <person name="Kondo H."/>
            <person name="Sugawara M."/>
            <person name="Takahashi M."/>
            <person name="Kanda K."/>
            <person name="Yokoi T."/>
            <person name="Furuya T."/>
            <person name="Kikkawa E."/>
            <person name="Omura Y."/>
            <person name="Abe K."/>
            <person name="Kamihara K."/>
            <person name="Katsuta N."/>
            <person name="Sato K."/>
            <person name="Tanikawa M."/>
            <person name="Yamazaki M."/>
            <person name="Ninomiya K."/>
            <person name="Ishibashi T."/>
            <person name="Yamashita H."/>
            <person name="Murakawa K."/>
            <person name="Fujimori K."/>
            <person name="Tanai H."/>
            <person name="Kimata M."/>
            <person name="Watanabe M."/>
            <person name="Hiraoka S."/>
            <person name="Chiba Y."/>
            <person name="Ishida S."/>
            <person name="Ono Y."/>
            <person name="Takiguchi S."/>
            <person name="Watanabe S."/>
            <person name="Yosida M."/>
            <person name="Hotuta T."/>
            <person name="Kusano J."/>
            <person name="Kanehori K."/>
            <person name="Takahashi-Fujii A."/>
            <person name="Hara H."/>
            <person name="Tanase T.-O."/>
            <person name="Nomura Y."/>
            <person name="Togiya S."/>
            <person name="Komai F."/>
            <person name="Hara R."/>
            <person name="Takeuchi K."/>
            <person name="Arita M."/>
            <person name="Imose N."/>
            <person name="Musashino K."/>
            <person name="Yuuki H."/>
            <person name="Oshima A."/>
            <person name="Sasaki N."/>
            <person name="Aotsuka S."/>
            <person name="Yoshikawa Y."/>
            <person name="Matsunawa H."/>
            <person name="Ichihara T."/>
            <person name="Shiohata N."/>
            <person name="Sano S."/>
            <person name="Moriya S."/>
            <person name="Momiyama H."/>
            <person name="Satoh N."/>
            <person name="Takami S."/>
            <person name="Terashima Y."/>
            <person name="Suzuki O."/>
            <person name="Nakagawa S."/>
            <person name="Senoh A."/>
            <person name="Mizoguchi H."/>
            <person name="Goto Y."/>
            <person name="Shimizu F."/>
            <person name="Wakebe H."/>
            <person name="Hishigaki H."/>
            <person name="Watanabe T."/>
            <person name="Sugiyama A."/>
            <person name="Takemoto M."/>
            <person name="Kawakami B."/>
            <person name="Yamazaki M."/>
            <person name="Watanabe K."/>
            <person name="Kumagai A."/>
            <person name="Itakura S."/>
            <person name="Fukuzumi Y."/>
            <person name="Fujimori Y."/>
            <person name="Komiyama M."/>
            <person name="Tashiro H."/>
            <person name="Tanigami A."/>
            <person name="Fujiwara T."/>
            <person name="Ono T."/>
            <person name="Yamada K."/>
            <person name="Fujii Y."/>
            <person name="Ozaki K."/>
            <person name="Hirao M."/>
            <person name="Ohmori Y."/>
            <person name="Kawabata A."/>
            <person name="Hikiji T."/>
            <person name="Kobatake N."/>
            <person name="Inagaki H."/>
            <person name="Ikema Y."/>
            <person name="Okamoto S."/>
            <person name="Okitani R."/>
            <person name="Kawakami T."/>
            <person name="Noguchi S."/>
            <person name="Itoh T."/>
            <person name="Shigeta K."/>
            <person name="Senba T."/>
            <person name="Matsumura K."/>
            <person name="Nakajima Y."/>
            <person name="Mizuno T."/>
            <person name="Morinaga M."/>
            <person name="Sasaki M."/>
            <person name="Togashi T."/>
            <person name="Oyama M."/>
            <person name="Hata H."/>
            <person name="Watanabe M."/>
            <person name="Komatsu T."/>
            <person name="Mizushima-Sugano J."/>
            <person name="Satoh T."/>
            <person name="Shirai Y."/>
            <person name="Takahashi Y."/>
            <person name="Nakagawa K."/>
            <person name="Okumura K."/>
            <person name="Nagase T."/>
            <person name="Nomura N."/>
            <person name="Kikuchi H."/>
            <person name="Masuho Y."/>
            <person name="Yamashita R."/>
            <person name="Nakai K."/>
            <person name="Yada T."/>
            <person name="Nakamura Y."/>
            <person name="Ohara O."/>
            <person name="Isogai T."/>
            <person name="Sugano S."/>
        </authorList>
    </citation>
    <scope>NUCLEOTIDE SEQUENCE [LARGE SCALE MRNA] (ISOFORM 2)</scope>
    <scope>VARIANT ILE-260</scope>
    <source>
        <tissue>Spleen</tissue>
    </source>
</reference>
<reference key="4">
    <citation type="journal article" date="2006" name="Nature">
        <title>DNA sequence of human chromosome 17 and analysis of rearrangement in the human lineage.</title>
        <authorList>
            <person name="Zody M.C."/>
            <person name="Garber M."/>
            <person name="Adams D.J."/>
            <person name="Sharpe T."/>
            <person name="Harrow J."/>
            <person name="Lupski J.R."/>
            <person name="Nicholson C."/>
            <person name="Searle S.M."/>
            <person name="Wilming L."/>
            <person name="Young S.K."/>
            <person name="Abouelleil A."/>
            <person name="Allen N.R."/>
            <person name="Bi W."/>
            <person name="Bloom T."/>
            <person name="Borowsky M.L."/>
            <person name="Bugalter B.E."/>
            <person name="Butler J."/>
            <person name="Chang J.L."/>
            <person name="Chen C.-K."/>
            <person name="Cook A."/>
            <person name="Corum B."/>
            <person name="Cuomo C.A."/>
            <person name="de Jong P.J."/>
            <person name="DeCaprio D."/>
            <person name="Dewar K."/>
            <person name="FitzGerald M."/>
            <person name="Gilbert J."/>
            <person name="Gibson R."/>
            <person name="Gnerre S."/>
            <person name="Goldstein S."/>
            <person name="Grafham D.V."/>
            <person name="Grocock R."/>
            <person name="Hafez N."/>
            <person name="Hagopian D.S."/>
            <person name="Hart E."/>
            <person name="Norman C.H."/>
            <person name="Humphray S."/>
            <person name="Jaffe D.B."/>
            <person name="Jones M."/>
            <person name="Kamal M."/>
            <person name="Khodiyar V.K."/>
            <person name="LaButti K."/>
            <person name="Laird G."/>
            <person name="Lehoczky J."/>
            <person name="Liu X."/>
            <person name="Lokyitsang T."/>
            <person name="Loveland J."/>
            <person name="Lui A."/>
            <person name="Macdonald P."/>
            <person name="Major J.E."/>
            <person name="Matthews L."/>
            <person name="Mauceli E."/>
            <person name="McCarroll S.A."/>
            <person name="Mihalev A.H."/>
            <person name="Mudge J."/>
            <person name="Nguyen C."/>
            <person name="Nicol R."/>
            <person name="O'Leary S.B."/>
            <person name="Osoegawa K."/>
            <person name="Schwartz D.C."/>
            <person name="Shaw-Smith C."/>
            <person name="Stankiewicz P."/>
            <person name="Steward C."/>
            <person name="Swarbreck D."/>
            <person name="Venkataraman V."/>
            <person name="Whittaker C.A."/>
            <person name="Yang X."/>
            <person name="Zimmer A.R."/>
            <person name="Bradley A."/>
            <person name="Hubbard T."/>
            <person name="Birren B.W."/>
            <person name="Rogers J."/>
            <person name="Lander E.S."/>
            <person name="Nusbaum C."/>
        </authorList>
    </citation>
    <scope>NUCLEOTIDE SEQUENCE [LARGE SCALE GENOMIC DNA]</scope>
</reference>
<reference key="5">
    <citation type="submission" date="2005-09" db="EMBL/GenBank/DDBJ databases">
        <authorList>
            <person name="Mural R.J."/>
            <person name="Istrail S."/>
            <person name="Sutton G.G."/>
            <person name="Florea L."/>
            <person name="Halpern A.L."/>
            <person name="Mobarry C.M."/>
            <person name="Lippert R."/>
            <person name="Walenz B."/>
            <person name="Shatkay H."/>
            <person name="Dew I."/>
            <person name="Miller J.R."/>
            <person name="Flanigan M.J."/>
            <person name="Edwards N.J."/>
            <person name="Bolanos R."/>
            <person name="Fasulo D."/>
            <person name="Halldorsson B.V."/>
            <person name="Hannenhalli S."/>
            <person name="Turner R."/>
            <person name="Yooseph S."/>
            <person name="Lu F."/>
            <person name="Nusskern D.R."/>
            <person name="Shue B.C."/>
            <person name="Zheng X.H."/>
            <person name="Zhong F."/>
            <person name="Delcher A.L."/>
            <person name="Huson D.H."/>
            <person name="Kravitz S.A."/>
            <person name="Mouchard L."/>
            <person name="Reinert K."/>
            <person name="Remington K.A."/>
            <person name="Clark A.G."/>
            <person name="Waterman M.S."/>
            <person name="Eichler E.E."/>
            <person name="Adams M.D."/>
            <person name="Hunkapiller M.W."/>
            <person name="Myers E.W."/>
            <person name="Venter J.C."/>
        </authorList>
    </citation>
    <scope>NUCLEOTIDE SEQUENCE [LARGE SCALE GENOMIC DNA]</scope>
    <scope>VARIANT ILE-260</scope>
</reference>
<reference key="6">
    <citation type="journal article" date="2004" name="Genome Res.">
        <title>The status, quality, and expansion of the NIH full-length cDNA project: the Mammalian Gene Collection (MGC).</title>
        <authorList>
            <consortium name="The MGC Project Team"/>
        </authorList>
    </citation>
    <scope>NUCLEOTIDE SEQUENCE [LARGE SCALE MRNA] (ISOFORM 2)</scope>
    <scope>VARIANT ILE-260</scope>
    <source>
        <tissue>Testis</tissue>
    </source>
</reference>
<reference key="7">
    <citation type="journal article" date="1999" name="Mol. Genet. Metab.">
        <title>Identification and detection of the common 65-kb deletion breakpoint in the nephropathic cystinosis gene (CTNS).</title>
        <authorList>
            <person name="Anikster Y."/>
            <person name="Lucero C."/>
            <person name="Touchman J.W."/>
            <person name="Huizing M."/>
            <person name="McDowell G."/>
            <person name="Shotelersuk V."/>
            <person name="Green E.D."/>
            <person name="Gahl W.A."/>
        </authorList>
    </citation>
    <scope>NUCLEOTIDE SEQUENCE [GENOMIC DNA] OF 228-367</scope>
    <scope>VARIANT ILE-260</scope>
</reference>
<reference key="8">
    <citation type="journal article" date="2017" name="Mol. Cell. Proteomics">
        <title>Impact of cystinosin glycosylation on protein stability by differential dynamic stable isotope labeling by amino acids in cell culture (SILAC).</title>
        <authorList>
            <person name="Nevo N."/>
            <person name="Thomas L."/>
            <person name="Chhuon C."/>
            <person name="Andrzejewska Z."/>
            <person name="Lipecka J."/>
            <person name="Guillonneau F."/>
            <person name="Bailleux A."/>
            <person name="Edelman A."/>
            <person name="Antignac C."/>
            <person name="Guerrera I.C."/>
        </authorList>
    </citation>
    <scope>PROTEIN SEQUENCE OF 23-33</scope>
    <scope>SUBCELLULAR LOCATION</scope>
    <scope>GLYCOSYLATION AT ASN-36; ASN-41; ASN-51; ASN-66; ASN-84; ASN-104 AND ASN-107</scope>
    <scope>CHARACTERIZATION OF VARIANT CTNSJAN 67-ILE--PRO-73 DEL</scope>
    <scope>MUTAGENESIS OF ASN-66</scope>
</reference>
<reference key="9">
    <citation type="journal article" date="1999" name="Hum. Mutat.">
        <title>CTNS mutations in patients with cystinosis.</title>
        <authorList>
            <person name="Anikster Y."/>
            <person name="Shotelersuk V."/>
            <person name="Gahl W.A."/>
        </authorList>
    </citation>
    <scope>REVIEW ON VARIANTS CYSTINOSIS</scope>
</reference>
<reference key="10">
    <citation type="journal article" date="2001" name="EMBO J.">
        <title>Cystinosin, the protein defective in cystinosis, is a H(+)-driven lysosomal cystine transporter.</title>
        <authorList>
            <person name="Kalatzis V."/>
            <person name="Cherqui S."/>
            <person name="Antignac C."/>
            <person name="Gasnier B."/>
        </authorList>
    </citation>
    <scope>FUNCTION</scope>
    <scope>CATALYTIC ACTIVITY</scope>
    <scope>BIOPHYSICOCHEMICAL PROPERTIES</scope>
    <scope>SUBCELLULAR LOCATION</scope>
    <scope>CHARACTERIZATION OF VARIANT CTNS ARG-308</scope>
</reference>
<reference key="11">
    <citation type="journal article" date="2001" name="J. Biol. Chem.">
        <title>The targeting of cystinosin to the lysosomal membrane requires a tyrosine-based signal and a novel sorting motif.</title>
        <authorList>
            <person name="Cherqui S."/>
            <person name="Kalatzis V."/>
            <person name="Trugnan G."/>
            <person name="Antignac C."/>
        </authorList>
    </citation>
    <scope>SUBCELLULAR LOCATION</scope>
    <scope>DOMAIN</scope>
    <scope>MUTAGENESIS OF 280-LYS--ASN-288; 281-TYR--GLN-284; 286-TYR--PHE-289; 289-PHE--SER-298; 362-GLY--LEU-366; GLY-362; TYR-363; ASP-364; GLN-365 AND LEU-366</scope>
</reference>
<reference key="12">
    <citation type="journal article" date="2007" name="Traffic">
        <title>Integral and associated lysosomal membrane proteins.</title>
        <authorList>
            <person name="Schroeder B."/>
            <person name="Wrocklage C."/>
            <person name="Pan C."/>
            <person name="Jaeger R."/>
            <person name="Koesters B."/>
            <person name="Schaefer H."/>
            <person name="Elsaesser H.-P."/>
            <person name="Mann M."/>
            <person name="Hasilik A."/>
        </authorList>
    </citation>
    <scope>SUBCELLULAR LOCATION [LARGE SCALE ANALYSIS]</scope>
    <source>
        <tissue>Placenta</tissue>
    </source>
</reference>
<reference key="13">
    <citation type="journal article" date="2008" name="Am. J. Physiol.">
        <title>Identification and subcellular localization of a new cystinosin isoform.</title>
        <authorList>
            <person name="Taranta A."/>
            <person name="Petrini S."/>
            <person name="Palma A."/>
            <person name="Mannucci L."/>
            <person name="Wilmer M.J."/>
            <person name="De Luca V."/>
            <person name="Diomedi-Camassei F."/>
            <person name="Corallini S."/>
            <person name="Bellomo F."/>
            <person name="van den Heuvel L.P."/>
            <person name="Levtchenko E.N."/>
            <person name="Emma F."/>
        </authorList>
    </citation>
    <scope>FUNCTION</scope>
    <scope>SUBCELLULAR LOCATION (ISOFORM 2)</scope>
    <scope>CATALYTIC ACTIVITY (ISOFORM 2)</scope>
    <scope>ALTERNATIVE SPLICING</scope>
</reference>
<reference key="14">
    <citation type="journal article" date="2012" name="FASEB J.">
        <title>Cystinosin is a melanosomal protein that regulates melanin synthesis.</title>
        <authorList>
            <person name="Chiaverini C."/>
            <person name="Sillard L."/>
            <person name="Flori E."/>
            <person name="Ito S."/>
            <person name="Briganti S."/>
            <person name="Wakamatsu K."/>
            <person name="Fontas E."/>
            <person name="Berard E."/>
            <person name="Cailliez M."/>
            <person name="Cochat P."/>
            <person name="Foulard M."/>
            <person name="Guest G."/>
            <person name="Niaudet P."/>
            <person name="Picardo M."/>
            <person name="Bernard F.X."/>
            <person name="Antignac C."/>
            <person name="Ortonne J.P."/>
            <person name="Ballotti R."/>
        </authorList>
    </citation>
    <scope>FUNCTION</scope>
    <scope>SUBCELLULAR LOCATION</scope>
</reference>
<reference key="15">
    <citation type="journal article" date="2012" name="Histochem. Cell Biol.">
        <title>Distribution of cystinosin-LKG in human tissues.</title>
        <authorList>
            <person name="Taranta A."/>
            <person name="Petrini S."/>
            <person name="Citti A."/>
            <person name="Boldrini R."/>
            <person name="Corallini S."/>
            <person name="Bellomo F."/>
            <person name="Levtchenko E."/>
            <person name="Emma F."/>
        </authorList>
    </citation>
    <scope>TISSUE SPECIFICITY (ISOFORMS 1 AND 2)</scope>
</reference>
<reference key="16">
    <citation type="journal article" date="2012" name="Proc. Natl. Acad. Sci. U.S.A.">
        <title>Mechanism of proton/substrate coupling in the heptahelical lysosomal transporter cystinosin.</title>
        <authorList>
            <person name="Ruivo R."/>
            <person name="Bellenchi G.C."/>
            <person name="Chen X."/>
            <person name="Zifarelli G."/>
            <person name="Sagne C."/>
            <person name="Debacker C."/>
            <person name="Pusch M."/>
            <person name="Supplisson S."/>
            <person name="Gasnier B."/>
        </authorList>
    </citation>
    <scope>FUNCTION</scope>
    <scope>CATALYTIC ACTIVITY</scope>
    <scope>BIOPHYSICOCHEMICAL PROPERTIES</scope>
    <scope>SITE</scope>
    <scope>CHARACTERIZATION OF VARIANTS CTNS ASN-205 AND ARG-308</scope>
    <scope>MUTAGENESIS OF TYR-143; ARG-152; ASP-161; HIS-211; TYR-281; ASP-305 AND LYS-335</scope>
</reference>
<reference key="17">
    <citation type="journal article" date="2015" name="Traffic">
        <title>Lysosomal targeting of cystinosin requires AP-3.</title>
        <authorList>
            <person name="Andrzejewska Z."/>
            <person name="Nevo N."/>
            <person name="Thomas L."/>
            <person name="Bailleux A."/>
            <person name="Chauvet V."/>
            <person name="Benmerah A."/>
            <person name="Antignac C."/>
        </authorList>
    </citation>
    <scope>SUBCELLULAR LOCATION</scope>
    <scope>INTERACTION WITH AP-3 COMPLEX (ISOFORM 1)</scope>
</reference>
<reference key="18">
    <citation type="journal article" date="2016" name="PLoS ONE">
        <title>Carboxyl-terminal SSLKG motif of the human cystinosin-LKG plays an important role in plasma membrane sorting.</title>
        <authorList>
            <person name="Bellomo F."/>
            <person name="Taranta A."/>
            <person name="Petrini S."/>
            <person name="Venditti R."/>
            <person name="Rocchetti M.T."/>
            <person name="Rega L.R."/>
            <person name="Corallini S."/>
            <person name="Gesualdo L."/>
            <person name="De Matteis M.A."/>
            <person name="Emma F."/>
        </authorList>
    </citation>
    <scope>SUBCELLULAR LOCATION (ISOFORM 2)</scope>
</reference>
<reference key="19">
    <citation type="journal article" date="2018" name="Sci. Rep.">
        <title>A genetic screen for investigating the human lysosomal cystine transporter, cystinosin.</title>
        <authorList>
            <person name="Deshpande A.A."/>
            <person name="Shukla A."/>
            <person name="Bachhawat A.K."/>
        </authorList>
    </citation>
    <scope>FUNCTION</scope>
    <scope>MUTAGENESIS OF GLY-131; ALA-137; SER-270; LEU-274; GLY-309; SER-312; 362-GLY--LEU-366; TYR-363 AND LEU-366</scope>
</reference>
<reference key="20">
    <citation type="journal article" date="2020" name="Nature">
        <title>MFSD12 mediates the import of cysteine into melanosomes and lysosomes.</title>
        <authorList>
            <person name="Adelmann C.H."/>
            <person name="Traunbauer A.K."/>
            <person name="Chen B."/>
            <person name="Condon K.J."/>
            <person name="Chan S.H."/>
            <person name="Kunchok T."/>
            <person name="Lewis C.A."/>
            <person name="Sabatini D.M."/>
        </authorList>
    </citation>
    <scope>FUNCTION</scope>
</reference>
<reference evidence="40 41 42 43 44 45" key="21">
    <citation type="journal article" date="2022" name="Cell">
        <title>Structure and mechanism of human cystine exporter cystinosin.</title>
        <authorList>
            <person name="Guo X."/>
            <person name="Schmiege P."/>
            <person name="Assafa T.E."/>
            <person name="Wang R."/>
            <person name="Xu Y."/>
            <person name="Donnelly L."/>
            <person name="Fine M."/>
            <person name="Ni X."/>
            <person name="Jiang J."/>
            <person name="Millhauser G."/>
            <person name="Feng L."/>
            <person name="Li X."/>
        </authorList>
    </citation>
    <scope>STRUCTURE BY ELECTRON MICROSCOPY (3.00 ANGSTROMS) OF 1-362 IN COMPLEX WITH CYSTINE</scope>
    <scope>FUNCTION</scope>
    <scope>ACTIVITY REGULATION</scope>
    <scope>TRANSPORTER ACTIVITY</scope>
    <scope>MUTAGENESIS OF TYR-134; TRP-138; PHE-142; GLN-145; ASN-166; PHE-170; ASP-205; LYS-273; TYR-281; GLN-284; ASN-301; ASP-305; GLN-319 AND LYS-335</scope>
    <scope>CHARACTERIZATION OF VARIANT CTNSJAN ARG-280</scope>
    <scope>CHARACTERIZATION OF VARIANT CTNS ASN-346</scope>
</reference>
<reference key="22">
    <citation type="journal article" date="1998" name="Am. J. Hum. Genet.">
        <title>CTNS mutations in an American-based population of cystinosis patients.</title>
        <authorList>
            <person name="Shotelersuk V."/>
            <person name="Larson D."/>
            <person name="Anikster Y."/>
            <person name="McDowell G."/>
            <person name="Lemons R."/>
            <person name="Bernardini I."/>
            <person name="Guo J."/>
            <person name="Thoene J."/>
            <person name="Gahl W.A."/>
        </authorList>
    </citation>
    <scope>VARIANTS CTNS ASP-169; ARG-182; ASN-205; ASP-205 DEL; ASN-298; GLY-305; ARG-308 AND ARG-339</scope>
    <scope>VARIANT CTNSJAN 67-ILE--PRO-73 DEL</scope>
    <scope>VARIANT ARG-292</scope>
</reference>
<reference key="23">
    <citation type="journal article" date="1999" name="Eur. J. Hum. Genet.">
        <title>Molecular analysis of cystinosis: probable Irish origin of the most common French Canadian mutation.</title>
        <authorList>
            <person name="McGowan-Jordan J."/>
            <person name="Stoddard K."/>
            <person name="Podolsky L."/>
            <person name="Orrbine E."/>
            <person name="McLaine P."/>
            <person name="Town M."/>
            <person name="Goodyer P."/>
            <person name="MacKenzie A."/>
            <person name="Heick H."/>
        </authorList>
    </citation>
    <scope>VARIANTS CTNS PHE-133 AND PRO-158</scope>
</reference>
<reference key="24">
    <citation type="journal article" date="1999" name="Mol. Genet. Metab.">
        <title>Mutations of CTNS causing intermediate cystinosis.</title>
        <authorList>
            <person name="Thoene J."/>
            <person name="Lemons R."/>
            <person name="Anikster Y."/>
            <person name="Mullet J."/>
            <person name="Paelicke K."/>
            <person name="Lucero C."/>
            <person name="Gahl W.A."/>
            <person name="Schneider J."/>
            <person name="Shu S.G."/>
            <person name="Campbell H.T."/>
        </authorList>
    </citation>
    <scope>VARIANTS CTNSJAN ARG-280 AND LYS-323</scope>
</reference>
<reference key="25">
    <citation type="journal article" date="1999" name="Hum. Mol. Genet.">
        <title>Severity of phenotype in cystinosis varies with mutations in the CTNS gene: predicted effect on the model of cystinosin.</title>
        <authorList>
            <person name="Attard M."/>
            <person name="Jean G."/>
            <person name="Forestier L."/>
            <person name="Cherqui S."/>
            <person name="van 't Hoff W."/>
            <person name="Broyer M."/>
            <person name="Antignac C."/>
            <person name="Town M."/>
        </authorList>
    </citation>
    <scope>VARIANTS CTNS PHE-139; ASP-205 DEL; SER-270 DEL; TYR-305; ARG-308; PRO-338; ARG-339; 343-ILE--ASP-346 DEL AND ASN-346</scope>
    <scope>VARIANT ILE-42</scope>
    <scope>VARIANT CTNSJAN PRO-CYS-SER-154 INS</scope>
</reference>
<reference key="26">
    <citation type="journal article" date="2000" name="Pediatr. Res.">
        <title>Ocular nonnephropathic cystinosis: clinical, biochemical, and molecular correlations.</title>
        <authorList>
            <person name="Anikster Y."/>
            <person name="Lucero C."/>
            <person name="Guo J."/>
            <person name="Huizing M."/>
            <person name="Shotelersuk V."/>
            <person name="Bernardini I."/>
            <person name="McDowell G."/>
            <person name="Iwata F."/>
            <person name="Kaiser-Kupfer M.I."/>
            <person name="Jaffe R."/>
            <person name="Thoene J."/>
            <person name="Schneider J.A."/>
            <person name="Gahl W.A."/>
        </authorList>
    </citation>
    <scope>VARIANT CTNSANN ARG-197</scope>
</reference>
<reference key="27">
    <citation type="journal article" date="2002" name="Hum. Mutat.">
        <title>Analysis of the CTNS gene in patients of German and Swiss origin with nephropathic cystinosis.</title>
        <authorList>
            <person name="Kiehntopf M."/>
            <person name="Schickel J."/>
            <person name="Gonne B."/>
            <person name="Koch H.G."/>
            <person name="Superti-Furga A."/>
            <person name="Steinmann B."/>
            <person name="Deufel T."/>
            <person name="Harms E."/>
        </authorList>
    </citation>
    <scope>VARIANTS CTNS VAL-308 AND ARG-339</scope>
</reference>
<reference key="28">
    <citation type="journal article" date="2002" name="Hum. Mutat.">
        <title>Identification of 14 novel CTNS mutations and characterization of seven splice site mutations associated with cystinosis.</title>
        <authorList>
            <person name="Kalatzis V."/>
            <person name="Cohen-Solal L."/>
            <person name="Cordier B."/>
            <person name="Frishberg Y."/>
            <person name="Kemper M."/>
            <person name="Nuutinen E.M."/>
            <person name="Legrand E."/>
            <person name="Cochat P."/>
            <person name="Antignac C."/>
        </authorList>
    </citation>
    <scope>VARIANTS CTNS VAL-110; ARG-222; LYS-288; 346-ASP--PHE-349 DEL AND ASP-VAL-GLU-PHE-349 INS</scope>
    <scope>VARIANTS CTNSJAN THR-177 AND LEU-200</scope>
</reference>
<reference key="29">
    <citation type="journal article" date="2003" name="Eur. J. Hum. Genet.">
        <title>Mutational spectrum of the CTNS gene in Italy.</title>
        <authorList>
            <person name="Mason S."/>
            <person name="Pepe G."/>
            <person name="Dall'Amico R."/>
            <person name="Tartaglia S."/>
            <person name="Casciani S."/>
            <person name="Greco M."/>
            <person name="Bencivenga P."/>
            <person name="Murer L."/>
            <person name="Rizzoni G."/>
            <person name="Tenconi R."/>
            <person name="Clementi M."/>
        </authorList>
    </citation>
    <scope>VARIANTS CTNS ILE-287; ARG-308; ARG-337 AND ARG-339</scope>
    <scope>VARIANT ILE-260</scope>
</reference>
<reference key="30">
    <citation type="journal article" date="2004" name="Hum. Mol. Genet.">
        <title>Molecular pathogenesis of cystinosis: effect of CTNS mutations on the transport activity and subcellular localization of cystinosin.</title>
        <authorList>
            <person name="Kalatzis V."/>
            <person name="Nevo N."/>
            <person name="Cherqui S."/>
            <person name="Gasnier B."/>
            <person name="Antignac C."/>
        </authorList>
    </citation>
    <scope>FUNCTION</scope>
    <scope>SUBCELLULAR LOCATION</scope>
    <scope>CHARACTERIZATION OF VARIANTS CTNS VAL-110; PHE-133; PHE-139; PHE-141; PRO-158; ASP-169; SER-177; ARG-182; ASN-205; ASP-205 DEL; ARG-222; SER-270 DEL; LYS-288; ASN-298; TYR-305; ARG-308; PRO-338; ARG-339; 343-ILE--ASP-346 DEL; ASP-346--349-PHE DEL AND ASP-VAL-GLU-PHE-349 INS</scope>
    <scope>CHARACTERIZATION OF VARIANT CTNSJAN 67-ILE--PRO-73 DEL; PRO-CYS-SER-154 INS; LEU-200; ARG-280; LYS-323 AND ASN-346</scope>
    <scope>CHARACTERIZATION OF VARIANT CTNSANN ARG-197</scope>
    <scope>CHARACTERIZATION OF VARIANT ILE-42 AND ILE-260</scope>
</reference>
<reference key="31">
    <citation type="journal article" date="2009" name="Ophthalmic Genet.">
        <title>Characterization of CTNS mutations in Arab patients with cystinosis.</title>
        <authorList>
            <person name="Aldahmesh M.A."/>
            <person name="Humeidan A."/>
            <person name="Almojalli H.A."/>
            <person name="Khan A.O."/>
            <person name="Rajab M."/>
            <person name="Al-Abbad A.A."/>
            <person name="Meyer B.F."/>
            <person name="Alkuraya F.S."/>
        </authorList>
    </citation>
    <scope>VARIANTS CTNS SER-177 AND ARG-338</scope>
</reference>
<reference key="32">
    <citation type="journal article" date="2012" name="Gene">
        <title>Two novel CTNS mutations in cystinosis patients in Thailand.</title>
        <authorList>
            <person name="Yeetong P."/>
            <person name="Tongkobpetch S."/>
            <person name="Kingwatanakul P."/>
            <person name="Deekajorndech T."/>
            <person name="Bernardini I.M."/>
            <person name="Suphapeetiporn K."/>
            <person name="Gahl W.A."/>
            <person name="Shotelersuk V."/>
        </authorList>
    </citation>
    <scope>VARIANTS CTNS ASP-309 AND LYS-323</scope>
</reference>
<reference key="33">
    <citation type="journal article" date="2012" name="Pediatr. Nephrol.">
        <title>Genetic basis of cystinosis in Turkish patients: a single-center experience.</title>
        <authorList>
            <person name="Topaloglu R."/>
            <person name="Vilboux T."/>
            <person name="Coskun T."/>
            <person name="Ozaltin F."/>
            <person name="Tinloy B."/>
            <person name="Gunay-Aygun M."/>
            <person name="Bakkaloglu A."/>
            <person name="Besbas N."/>
            <person name="van den Heuvel L."/>
            <person name="Kleta R."/>
            <person name="Gahl W.A."/>
        </authorList>
    </citation>
    <scope>VARIANTS CTNS GLY-151; ASP-157 AND CYS-173</scope>
</reference>
<protein>
    <recommendedName>
        <fullName evidence="36">Cystinosin</fullName>
    </recommendedName>
</protein>
<name>CTNS_HUMAN</name>
<keyword id="KW-0002">3D-structure</keyword>
<keyword id="KW-0025">Alternative splicing</keyword>
<keyword id="KW-1003">Cell membrane</keyword>
<keyword id="KW-0903">Direct protein sequencing</keyword>
<keyword id="KW-0225">Disease variant</keyword>
<keyword id="KW-0325">Glycoprotein</keyword>
<keyword id="KW-0458">Lysosome</keyword>
<keyword id="KW-0470">Melanin biosynthesis</keyword>
<keyword id="KW-0472">Membrane</keyword>
<keyword id="KW-0653">Protein transport</keyword>
<keyword id="KW-1267">Proteomics identification</keyword>
<keyword id="KW-1185">Reference proteome</keyword>
<keyword id="KW-0677">Repeat</keyword>
<keyword id="KW-0732">Signal</keyword>
<keyword id="KW-0769">Symport</keyword>
<keyword id="KW-0812">Transmembrane</keyword>
<keyword id="KW-1133">Transmembrane helix</keyword>
<keyword id="KW-0813">Transport</keyword>
<sequence>MIRNWLTIFILFPLKLVEKCESSVSLTVPPVVKLENGSSTNVSLTLRPPLNATLVITFEITFRSKNITILELPDEVVVPPGVTNSSFQVTSQNVGQLTVYLHGNHSNQTGPRIRFLVIRSSAISIINQVIGWIYFVAWSISFYPQVIMNWRRKSVIGLSFDFVALNLTGFVAYSVFNIGLLWVPYIKEQFLLKYPNGVNPVNSNDVFFSLHAVVLTLIIIVQCCLYERGGQRVSWPAIGFLVLAWLFAFVTMIVAAVGVTTWLQFLFCFSYIKLAVTLVKYFPQAYMNFYYKSTEGWSIGNVLLDFTGGSFSLLQMFLQSYNNDQWTLIFGDPTKFGLGVFSIVFDVVFFIQHFCLYRKRPGYDQLN</sequence>
<proteinExistence type="evidence at protein level"/>
<organism>
    <name type="scientific">Homo sapiens</name>
    <name type="common">Human</name>
    <dbReference type="NCBI Taxonomy" id="9606"/>
    <lineage>
        <taxon>Eukaryota</taxon>
        <taxon>Metazoa</taxon>
        <taxon>Chordata</taxon>
        <taxon>Craniata</taxon>
        <taxon>Vertebrata</taxon>
        <taxon>Euteleostomi</taxon>
        <taxon>Mammalia</taxon>
        <taxon>Eutheria</taxon>
        <taxon>Euarchontoglires</taxon>
        <taxon>Primates</taxon>
        <taxon>Haplorrhini</taxon>
        <taxon>Catarrhini</taxon>
        <taxon>Hominidae</taxon>
        <taxon>Homo</taxon>
    </lineage>
</organism>